<dbReference type="EMBL" id="AY099114">
    <property type="protein sequence ID" value="AAM33125.1"/>
    <property type="molecule type" value="Genomic_RNA"/>
</dbReference>
<dbReference type="EMBL" id="FJ483840">
    <property type="protein sequence ID" value="ACT66729.1"/>
    <property type="molecule type" value="Genomic_RNA"/>
</dbReference>
<dbReference type="EMBL" id="GQ153928">
    <property type="protein sequence ID" value="ACY07222.1"/>
    <property type="molecule type" value="Genomic_RNA"/>
</dbReference>
<dbReference type="EMBL" id="GQ153929">
    <property type="protein sequence ID" value="ACY07226.1"/>
    <property type="molecule type" value="Genomic_RNA"/>
</dbReference>
<dbReference type="EMBL" id="GQ153930">
    <property type="protein sequence ID" value="ACY07230.1"/>
    <property type="molecule type" value="Genomic_RNA"/>
</dbReference>
<dbReference type="EMBL" id="GQ153931">
    <property type="protein sequence ID" value="ACY07234.1"/>
    <property type="molecule type" value="Genomic_RNA"/>
</dbReference>
<dbReference type="EMBL" id="JF719735">
    <property type="protein sequence ID" value="AEQ25540.1"/>
    <property type="molecule type" value="Genomic_RNA"/>
</dbReference>
<dbReference type="EMBL" id="JF719736">
    <property type="protein sequence ID" value="AEQ25544.1"/>
    <property type="molecule type" value="Genomic_RNA"/>
</dbReference>
<dbReference type="EMBL" id="JF719737">
    <property type="protein sequence ID" value="AEQ25548.1"/>
    <property type="molecule type" value="Genomic_RNA"/>
</dbReference>
<dbReference type="EMBL" id="AB971354">
    <property type="protein sequence ID" value="BAP18762.1"/>
    <property type="molecule type" value="Genomic_RNA"/>
</dbReference>
<dbReference type="PDB" id="5MNT">
    <property type="method" value="X-ray"/>
    <property type="resolution" value="3.32 A"/>
    <property type="chains" value="A/B/C/D=2-420"/>
</dbReference>
<dbReference type="PDB" id="5VLZ">
    <property type="method" value="EM"/>
    <property type="resolution" value="4.40 A"/>
    <property type="chains" value="EJ=1-420"/>
</dbReference>
<dbReference type="PDB" id="5VM7">
    <property type="method" value="EM"/>
    <property type="resolution" value="5.70 A"/>
    <property type="chains" value="A=1-420"/>
</dbReference>
<dbReference type="PDB" id="7LHD">
    <property type="method" value="EM"/>
    <property type="resolution" value="4.60 A"/>
    <property type="chains" value="M=1-420"/>
</dbReference>
<dbReference type="PDBsum" id="5MNT"/>
<dbReference type="PDBsum" id="5VLZ"/>
<dbReference type="PDBsum" id="5VM7"/>
<dbReference type="PDBsum" id="7LHD"/>
<dbReference type="EMDB" id="EMD-23336"/>
<dbReference type="EMDB" id="EMD-8709"/>
<dbReference type="EMDB" id="EMD-8711"/>
<dbReference type="SMR" id="Q8LTE2"/>
<dbReference type="Proteomes" id="UP000001616">
    <property type="component" value="Segment"/>
</dbReference>
<dbReference type="Proteomes" id="UP000185268">
    <property type="component" value="Segment"/>
</dbReference>
<dbReference type="Proteomes" id="UP000305125">
    <property type="component" value="Segment"/>
</dbReference>
<dbReference type="Proteomes" id="UP000306921">
    <property type="component" value="Segment"/>
</dbReference>
<dbReference type="Proteomes" id="UP000309733">
    <property type="component" value="Segment"/>
</dbReference>
<dbReference type="GO" id="GO:0044423">
    <property type="term" value="C:virion component"/>
    <property type="evidence" value="ECO:0007669"/>
    <property type="project" value="UniProtKB-KW"/>
</dbReference>
<dbReference type="GO" id="GO:0098671">
    <property type="term" value="P:adhesion receptor-mediated virion attachment to host cell"/>
    <property type="evidence" value="ECO:0007669"/>
    <property type="project" value="UniProtKB-KW"/>
</dbReference>
<dbReference type="GO" id="GO:0039636">
    <property type="term" value="P:symbiont-mediated suppression of host cell wall biogenesis"/>
    <property type="evidence" value="ECO:0000314"/>
    <property type="project" value="UniProtKB"/>
</dbReference>
<dbReference type="GO" id="GO:0039635">
    <property type="term" value="P:symbiont-mediated suppression of host peptidoglycan biosynthetic process"/>
    <property type="evidence" value="ECO:0000314"/>
    <property type="project" value="CACAO"/>
</dbReference>
<dbReference type="GO" id="GO:0044659">
    <property type="term" value="P:viral release from host cell by cytolysis"/>
    <property type="evidence" value="ECO:0000315"/>
    <property type="project" value="UniProtKB"/>
</dbReference>
<dbReference type="GO" id="GO:0039640">
    <property type="term" value="P:viral release via suppression of host peptidoglycan biosynthetic process"/>
    <property type="evidence" value="ECO:0000314"/>
    <property type="project" value="CACAO"/>
</dbReference>
<dbReference type="GO" id="GO:0039666">
    <property type="term" value="P:virion attachment to host cell pilus"/>
    <property type="evidence" value="ECO:0007669"/>
    <property type="project" value="UniProtKB-KW"/>
</dbReference>
<dbReference type="InterPro" id="IPR005563">
    <property type="entry name" value="A_protein"/>
</dbReference>
<dbReference type="Pfam" id="PF03863">
    <property type="entry name" value="Phage_mat-A"/>
    <property type="match status" value="1"/>
</dbReference>
<feature type="chain" id="PRO_0000438881" description="Maturation protein A2">
    <location>
        <begin position="1"/>
        <end position="420"/>
    </location>
</feature>
<feature type="region of interest" description="RNA-binding" evidence="9">
    <location>
        <begin position="158"/>
        <end position="176"/>
    </location>
</feature>
<feature type="region of interest" description="RNA-binding" evidence="9">
    <location>
        <begin position="226"/>
        <end position="236"/>
    </location>
</feature>
<feature type="region of interest" description="RNA-binding" evidence="9">
    <location>
        <begin position="294"/>
        <end position="298"/>
    </location>
</feature>
<feature type="sequence variant" description="In strain: Qbeta_2_FR." evidence="5">
    <original>F</original>
    <variation>L</variation>
    <location>
        <position position="29"/>
    </location>
</feature>
<feature type="sequence variant" description="In strain: Qbeta_2." evidence="4">
    <original>S</original>
    <variation>L</variation>
    <location>
        <position position="76"/>
    </location>
</feature>
<feature type="sequence variant" description="In strain: Qbeta_2." evidence="4">
    <original>D</original>
    <variation>G</variation>
    <location>
        <position position="100"/>
    </location>
</feature>
<feature type="sequence variant" description="In strain: Qbeta_2_FR." evidence="5">
    <original>N</original>
    <variation>D</variation>
    <location>
        <position position="110"/>
    </location>
</feature>
<feature type="sequence variant" description="In strain: TW18." evidence="3">
    <original>F</original>
    <variation>S</variation>
    <location>
        <position position="121"/>
    </location>
</feature>
<feature type="sequence variant" description="In strain: Qbeta_3_FR." evidence="5">
    <original>Q</original>
    <variation>K</variation>
    <location>
        <position position="138"/>
    </location>
</feature>
<feature type="sequence variant" description="In strain: Qbeta_3." evidence="4">
    <original>S</original>
    <variation>F</variation>
    <location>
        <position position="189"/>
    </location>
</feature>
<feature type="sequence variant" description="In strain: TW18." evidence="3">
    <original>A</original>
    <variation>T</variation>
    <location>
        <position position="198"/>
    </location>
</feature>
<feature type="sequence variant" description="In strain: Qbeta_3_FR." evidence="5">
    <original>I</original>
    <variation>V</variation>
    <location>
        <position position="218"/>
    </location>
</feature>
<feature type="sequence variant" description="In strain: Qbeta_1." evidence="4">
    <original>R</original>
    <variation>G</variation>
    <location>
        <position position="219"/>
    </location>
</feature>
<feature type="sequence variant" description="In strain: TW18." evidence="3">
    <original>R</original>
    <variation>K</variation>
    <location>
        <position position="219"/>
    </location>
</feature>
<feature type="sequence variant" description="In strain: TW18." evidence="3">
    <original>Y</original>
    <variation>C</variation>
    <location>
        <position position="246"/>
    </location>
</feature>
<feature type="sequence variant" description="In strain: Qbeta_3." evidence="4">
    <original>Y</original>
    <variation>C</variation>
    <location>
        <position position="254"/>
    </location>
</feature>
<feature type="sequence variant" description="In strain: Qbeta_3_FR and Qbeta_3." evidence="4 5">
    <original>E</original>
    <variation>G</variation>
    <location>
        <position position="282"/>
    </location>
</feature>
<feature type="sequence variant" description="In strain: Qbeta_2." evidence="4">
    <original>I</original>
    <variation>M</variation>
    <location>
        <position position="331"/>
    </location>
</feature>
<feature type="sequence variant" description="In strain: Qbeta_3_F and Qbeta_3." evidence="4 5">
    <original>I</original>
    <variation>V</variation>
    <location>
        <position position="360"/>
    </location>
</feature>
<feature type="sequence variant" description="In strain: TW18." evidence="3">
    <original>S</original>
    <variation>D</variation>
    <location>
        <position position="374"/>
    </location>
</feature>
<feature type="sequence variant" description="In strain: TW18." evidence="3">
    <original>N</original>
    <variation>S</variation>
    <location>
        <position position="389"/>
    </location>
</feature>
<feature type="sequence variant" description="In strain: TW18." evidence="3">
    <original>F</original>
    <variation>Y</variation>
    <location>
        <position position="404"/>
    </location>
</feature>
<feature type="sequence variant" description="In strain: Qbeta_2_FR and Qbeta_3FR." evidence="4 5">
    <original>F</original>
    <variation>S</variation>
    <location>
        <position position="412"/>
    </location>
</feature>
<feature type="sequence variant" description="In strain: TW18." evidence="3">
    <original>V</original>
    <variation>I</variation>
    <location>
        <position position="418"/>
    </location>
</feature>
<feature type="sequence variant" description="In strain: Qbeta_2_FR." evidence="5">
    <original>K</original>
    <variation>N</variation>
    <location>
        <position position="419"/>
    </location>
</feature>
<feature type="strand" evidence="24">
    <location>
        <begin position="6"/>
        <end position="10"/>
    </location>
</feature>
<feature type="strand" evidence="24">
    <location>
        <begin position="16"/>
        <end position="18"/>
    </location>
</feature>
<feature type="helix" evidence="24">
    <location>
        <begin position="20"/>
        <end position="24"/>
    </location>
</feature>
<feature type="strand" evidence="24">
    <location>
        <begin position="29"/>
        <end position="31"/>
    </location>
</feature>
<feature type="strand" evidence="24">
    <location>
        <begin position="38"/>
        <end position="47"/>
    </location>
</feature>
<feature type="strand" evidence="24">
    <location>
        <begin position="49"/>
        <end position="55"/>
    </location>
</feature>
<feature type="strand" evidence="24">
    <location>
        <begin position="62"/>
        <end position="64"/>
    </location>
</feature>
<feature type="strand" evidence="24">
    <location>
        <begin position="84"/>
        <end position="103"/>
    </location>
</feature>
<feature type="turn" evidence="24">
    <location>
        <begin position="104"/>
        <end position="106"/>
    </location>
</feature>
<feature type="strand" evidence="24">
    <location>
        <begin position="107"/>
        <end position="120"/>
    </location>
</feature>
<feature type="helix" evidence="24">
    <location>
        <begin position="129"/>
        <end position="177"/>
    </location>
</feature>
<feature type="helix" evidence="24">
    <location>
        <begin position="180"/>
        <end position="188"/>
    </location>
</feature>
<feature type="helix" evidence="24">
    <location>
        <begin position="203"/>
        <end position="210"/>
    </location>
</feature>
<feature type="helix" evidence="24">
    <location>
        <begin position="212"/>
        <end position="234"/>
    </location>
</feature>
<feature type="strand" evidence="24">
    <location>
        <begin position="237"/>
        <end position="253"/>
    </location>
</feature>
<feature type="strand" evidence="24">
    <location>
        <begin position="261"/>
        <end position="280"/>
    </location>
</feature>
<feature type="turn" evidence="24">
    <location>
        <begin position="281"/>
        <end position="286"/>
    </location>
</feature>
<feature type="turn" evidence="24">
    <location>
        <begin position="289"/>
        <end position="291"/>
    </location>
</feature>
<feature type="helix" evidence="24">
    <location>
        <begin position="295"/>
        <end position="303"/>
    </location>
</feature>
<feature type="turn" evidence="24">
    <location>
        <begin position="304"/>
        <end position="306"/>
    </location>
</feature>
<feature type="helix" evidence="24">
    <location>
        <begin position="312"/>
        <end position="315"/>
    </location>
</feature>
<feature type="helix" evidence="24">
    <location>
        <begin position="317"/>
        <end position="336"/>
    </location>
</feature>
<feature type="helix" evidence="24">
    <location>
        <begin position="337"/>
        <end position="339"/>
    </location>
</feature>
<feature type="strand" evidence="24">
    <location>
        <begin position="341"/>
        <end position="364"/>
    </location>
</feature>
<feature type="strand" evidence="24">
    <location>
        <begin position="367"/>
        <end position="379"/>
    </location>
</feature>
<feature type="strand" evidence="24">
    <location>
        <begin position="382"/>
        <end position="386"/>
    </location>
</feature>
<feature type="helix" evidence="24">
    <location>
        <begin position="397"/>
        <end position="400"/>
    </location>
</feature>
<feature type="helix" evidence="24">
    <location>
        <begin position="402"/>
        <end position="416"/>
    </location>
</feature>
<evidence type="ECO:0000269" key="1">
    <source>
    </source>
</evidence>
<evidence type="ECO:0000269" key="2">
    <source>
    </source>
</evidence>
<evidence type="ECO:0000269" key="3">
    <source>
    </source>
</evidence>
<evidence type="ECO:0000269" key="4">
    <source>
    </source>
</evidence>
<evidence type="ECO:0000269" key="5">
    <source>
    </source>
</evidence>
<evidence type="ECO:0000269" key="6">
    <source>
    </source>
</evidence>
<evidence type="ECO:0000269" key="7">
    <source>
    </source>
</evidence>
<evidence type="ECO:0000269" key="8">
    <source>
    </source>
</evidence>
<evidence type="ECO:0000269" key="9">
    <source>
    </source>
</evidence>
<evidence type="ECO:0000269" key="10">
    <source>
    </source>
</evidence>
<evidence type="ECO:0000305" key="11"/>
<evidence type="ECO:0000312" key="12">
    <source>
        <dbReference type="EMBL" id="AAM33125.1"/>
    </source>
</evidence>
<evidence type="ECO:0000312" key="13">
    <source>
        <dbReference type="EMBL" id="ACT66729.1"/>
    </source>
</evidence>
<evidence type="ECO:0000312" key="14">
    <source>
        <dbReference type="EMBL" id="ACY07222.1"/>
    </source>
</evidence>
<evidence type="ECO:0000312" key="15">
    <source>
        <dbReference type="EMBL" id="ACY07226.1"/>
    </source>
</evidence>
<evidence type="ECO:0000312" key="16">
    <source>
        <dbReference type="EMBL" id="ACY07230.1"/>
    </source>
</evidence>
<evidence type="ECO:0000312" key="17">
    <source>
        <dbReference type="EMBL" id="ACY07234.1"/>
    </source>
</evidence>
<evidence type="ECO:0000312" key="18">
    <source>
        <dbReference type="EMBL" id="AEQ25540.1"/>
    </source>
</evidence>
<evidence type="ECO:0000312" key="19">
    <source>
        <dbReference type="EMBL" id="AEQ25544.1"/>
    </source>
</evidence>
<evidence type="ECO:0000312" key="20">
    <source>
        <dbReference type="EMBL" id="AEQ25548.1"/>
    </source>
</evidence>
<evidence type="ECO:0000312" key="21">
    <source>
        <dbReference type="EMBL" id="BAP18762.1"/>
    </source>
</evidence>
<evidence type="ECO:0000312" key="22">
    <source>
        <dbReference type="Proteomes" id="UP000001616"/>
    </source>
</evidence>
<evidence type="ECO:0007744" key="23">
    <source>
        <dbReference type="PDB" id="5MNT"/>
    </source>
</evidence>
<evidence type="ECO:0007829" key="24">
    <source>
        <dbReference type="PDB" id="5MNT"/>
    </source>
</evidence>
<organism evidence="12">
    <name type="scientific">Escherichia virus Qbeta</name>
    <name type="common">Bacteriophage Q-beta</name>
    <dbReference type="NCBI Taxonomy" id="39803"/>
    <lineage>
        <taxon>Viruses</taxon>
        <taxon>Riboviria</taxon>
        <taxon>Orthornavirae</taxon>
        <taxon>Lenarviricota</taxon>
        <taxon>Leviviricetes</taxon>
        <taxon>Norzivirales</taxon>
        <taxon>Fiersviridae</taxon>
        <taxon>Qubevirus</taxon>
    </lineage>
</organism>
<name>MATA2_BPQBE</name>
<accession>Q8LTE2</accession>
<accession>C8YJH8</accession>
<accession>D0U1F1</accession>
<accession>D0U1F5</accession>
<accession>D0U1F9</accession>
<accession>D0U1G3</accession>
<accession>G4WZR1</accession>
<accession>G4WZR5</accession>
<organismHost>
    <name type="scientific">Escherichia coli</name>
    <dbReference type="NCBI Taxonomy" id="562"/>
</organismHost>
<protein>
    <recommendedName>
        <fullName evidence="12">Maturation protein A2</fullName>
        <shortName>MP</shortName>
    </recommendedName>
    <alternativeName>
        <fullName>A2 protein</fullName>
    </alternativeName>
</protein>
<sequence length="420" mass="48547">MPKLPRGLRFGADNEILNDFQELWFPDLFIESSDTHPWYTLKGRVLNAHLDDRLPNVGGRQVRRTPHRVTVPIASSGLRPVTTVQYDPAALSFLLNARVDWDFGNGDSANLVINDFLFRTFAPKEFDFSNSLVPRYTQAFSAFNAKYGTMIGEGLETIKYLGLLLRRLREGYRAVKRGDLRALRRVIQSYHNGKWKPATAGNLWLEFRYGLMPLFYDIRDVMLDWQNRHDKIQRLLRFSVGHGEDYVVEFDNLYPAVAYFKLKGEITLERRHRHGISYANREGYAVFDNGSLRPVSDWKELATAFINPHEVAWELTPYSFVVDWFLNVGDILAQQGQLYHNIDIVDGFDRRDIRLKSFTIKGERNGRPVNVSASLSAVDLFYSRLHTSNLPFATLDLDTTFSSFKHVLDSIFLLTQRVKR</sequence>
<reference key="1">
    <citation type="journal article" date="2003" name="BMC Evol. Biol.">
        <title>Evolution of phage with chemically ambiguous proteomes.</title>
        <authorList>
            <person name="Bacher J.M."/>
            <person name="Bull J.J."/>
            <person name="Ellington A.D."/>
        </authorList>
    </citation>
    <scope>NUCLEOTIDE SEQUENCE [GENOMIC RNA]</scope>
</reference>
<reference key="2">
    <citation type="journal article" date="2009" name="J. Virol.">
        <title>Gene mapping and phylogenetic analysis of the complete genome from 30 single-stranded RNA male-specific coliphages (family Leviviridae).</title>
        <authorList>
            <person name="Friedman S.D."/>
            <person name="Genthner F.J."/>
            <person name="Gentry J."/>
            <person name="Sobsey M.D."/>
            <person name="Vinje J."/>
        </authorList>
    </citation>
    <scope>NUCLEOTIDE SEQUENCE [GENOMIC RNA]</scope>
    <source>
        <strain evidence="13 22">TW18</strain>
    </source>
</reference>
<reference key="3">
    <citation type="journal article" date="2009" name="PLoS Genet.">
        <title>The fitness effects of random mutations in single-stranded DNA and RNA bacteriophages.</title>
        <authorList>
            <person name="Domingo-Calap P."/>
            <person name="Cuevas J.M."/>
            <person name="Sanjuan R."/>
        </authorList>
    </citation>
    <scope>NUCLEOTIDE SEQUENCE [GENOMIC RNA]</scope>
    <source>
        <strain evidence="14">QB_1</strain>
        <strain evidence="15">QB_2</strain>
        <strain evidence="16">QB_3</strain>
        <strain evidence="17">QB_ancestral</strain>
    </source>
</reference>
<reference key="4">
    <citation type="journal article" date="2011" name="Evolution">
        <title>Experimental evolution of RNA versus DNA viruses.</title>
        <authorList>
            <person name="Domingo-Calap P."/>
            <person name="Sanjuan R."/>
        </authorList>
    </citation>
    <scope>NUCLEOTIDE SEQUENCE [GENOMIC RNA]</scope>
    <source>
        <strain evidence="18">Qbeta_1_FR</strain>
        <strain evidence="19">Qbeta_2_FR</strain>
        <strain evidence="20">Qbeta_3_FR</strain>
    </source>
</reference>
<reference key="5">
    <citation type="journal article" date="2014" name="J. Virol.">
        <title>Contribution of silent mutations to thermal adaptation of RNA bacteriophage Qbeta.</title>
        <authorList>
            <person name="Kashiwagi A."/>
            <person name="Sugawara R."/>
            <person name="Sano-Tsushima F."/>
            <person name="Kumagai T."/>
            <person name="Yomo T."/>
        </authorList>
    </citation>
    <scope>NUCLEOTIDE SEQUENCE [GENOMIC RNA]</scope>
    <source>
        <strain evidence="21">QB_ancestral</strain>
        <strain evidence="22">TW18</strain>
    </source>
</reference>
<reference key="6">
    <citation type="journal article" date="1983" name="EMBO J.">
        <title>The lysis function of RNA bacteriophage Qbeta is mediated by the maturation (A2) protein.</title>
        <authorList>
            <person name="Karnik S."/>
            <person name="Billeter M."/>
        </authorList>
    </citation>
    <scope>FUNCTION</scope>
</reference>
<reference key="7">
    <citation type="journal article" date="2001" name="Science">
        <title>A protein antibiotic in the phage Qbeta virion: diversity in lysis targets.</title>
        <authorList>
            <person name="Bernhardt T.G."/>
            <person name="Wang I.N."/>
            <person name="Struck D.K."/>
            <person name="Young R."/>
        </authorList>
    </citation>
    <scope>FUNCTION</scope>
</reference>
<reference key="8">
    <citation type="journal article" date="2012" name="Mol. Microbiol.">
        <title>Inhibitory mechanism of the Qbeta lysis protein A2.</title>
        <authorList>
            <person name="Reed C.A."/>
            <person name="Langlais C."/>
            <person name="Kuznetsov V."/>
            <person name="Young R."/>
        </authorList>
    </citation>
    <scope>INTERACTION WITH HOST MURA</scope>
</reference>
<reference key="9">
    <citation type="journal article" date="2013" name="Microbiology">
        <title>A(2) expression and assembly regulates lysis in Qbeta infections.</title>
        <authorList>
            <person name="Reed C.A."/>
            <person name="Langlais C."/>
            <person name="Wang I.N."/>
            <person name="Young R."/>
        </authorList>
    </citation>
    <scope>FUNCTION</scope>
</reference>
<reference key="10">
    <citation type="journal article" date="2016" name="Proc. Natl. Acad. Sci. U.S.A.">
        <title>Asymmetric cryo-EM structure of the canonical Allolevivirus Qbeta reveals a single maturation protein and the genomic ssRNA in situ.</title>
        <authorList>
            <person name="Gorzelnik K.V."/>
            <person name="Cui Z."/>
            <person name="Reed C.A."/>
            <person name="Jakana J."/>
            <person name="Young R."/>
            <person name="Zhang J."/>
        </authorList>
    </citation>
    <scope>SUBCELLULAR LOCATION</scope>
</reference>
<reference evidence="23" key="11">
    <citation type="journal article" date="2017" name="J. Mol. Biol.">
        <title>Crystal structure of the maturation protein from bacteriophage Qbeta.</title>
        <authorList>
            <person name="Rumnieks J."/>
            <person name="Tars K."/>
        </authorList>
    </citation>
    <scope>X-RAY CRYSTALLOGRAPHY (3.32 ANGSTROMS) OF 2-420</scope>
    <scope>RNA-BINDING</scope>
    <scope>INTERACTION WITH CAPSID PROTEIN</scope>
</reference>
<reference key="12">
    <citation type="journal article" date="2017" name="Proc. Natl. Acad. Sci. U.S.A.">
        <title>Structures of Qbeta virions, virus-like particles, and the Qbeta-MurA complex reveal internal coat proteins and the mechanism of host lysis.</title>
        <authorList>
            <person name="Cui Z."/>
            <person name="Gorzelnik K.V."/>
            <person name="Chang J.Y."/>
            <person name="Langlais C."/>
            <person name="Jakana J."/>
            <person name="Young R."/>
            <person name="Zhang J."/>
        </authorList>
    </citation>
    <scope>STRUCTURE BY ELECTRON MICROSCOPY (4.40 ANGSTROMS)</scope>
    <scope>INTERACTION WITH HOST MURA</scope>
    <scope>INTERACTION WITH THE CAPSID PROTEIN</scope>
    <scope>FUNCTION</scope>
    <scope>SUBCELLULAR LOCATION</scope>
</reference>
<proteinExistence type="evidence at protein level"/>
<comment type="function">
    <text evidence="1 2 7 9 10">Induces host cell lysis (PubMed:11892805, PubMed:29078304). Inhibits host MurA activity thereby blocking the synthesis of murein precursors necessary for the host cell wall biosynthesis (PubMed:11423662, PubMed:29078304). May be responsible for the attachment to the host pilus. Makes extensive contacts with the viral genome (PubMed:28111107).</text>
</comment>
<comment type="subunit">
    <text evidence="6 9 10">Interacts with host MurA; this interaction inhibits the first step in host cell wall synthesis (PubMed:22934834, PubMed:29078304). Interacts with the capsid protein (PubMed:28111107, PubMed:29078304).</text>
</comment>
<comment type="subcellular location">
    <subcellularLocation>
        <location evidence="8 10">Virion</location>
    </subcellularLocation>
    <text evidence="8 10">A single copy of the maturation protein is present in the virion.</text>
</comment>
<comment type="similarity">
    <text evidence="11">Belongs to the Leviviricetes maturation protein family.</text>
</comment>
<keyword id="KW-0002">3D-structure</keyword>
<keyword id="KW-0204">Cytolysis</keyword>
<keyword id="KW-0578">Host cell lysis by virus</keyword>
<keyword id="KW-0945">Host-virus interaction</keyword>
<keyword id="KW-1233">Viral attachment to host adhesion receptor</keyword>
<keyword id="KW-1161">Viral attachment to host cell</keyword>
<keyword id="KW-1175">Viral attachment to host cell pilus</keyword>
<keyword id="KW-1188">Viral release from host cell</keyword>
<keyword id="KW-0946">Virion</keyword>
<keyword id="KW-1160">Virus entry into host cell</keyword>